<sequence>MAEQAGAGSAQDNRGGGRDDRGGRGRRDDRGGRGGRDDREKSNYLERVVTINRVSKVVKGGRRFSFTALVIVGDGKGMVGVGYGKAKEVPAAIAKGVEEARKNFFRVPLIGGTVTHPVQGEAAAGVVMLRPASPGTGVIAGGACRAVLECAGVHDVLAKSLGSDNAINVVHATVAALKLLQRPEEVAARRGLPIEDVAPAGMLRARREAEALAVSAAREGTA</sequence>
<proteinExistence type="inferred from homology"/>
<accession>A4TED4</accession>
<organism>
    <name type="scientific">Mycolicibacterium gilvum (strain PYR-GCK)</name>
    <name type="common">Mycobacterium gilvum (strain PYR-GCK)</name>
    <dbReference type="NCBI Taxonomy" id="350054"/>
    <lineage>
        <taxon>Bacteria</taxon>
        <taxon>Bacillati</taxon>
        <taxon>Actinomycetota</taxon>
        <taxon>Actinomycetes</taxon>
        <taxon>Mycobacteriales</taxon>
        <taxon>Mycobacteriaceae</taxon>
        <taxon>Mycolicibacterium</taxon>
    </lineage>
</organism>
<comment type="function">
    <text evidence="1">With S4 and S12 plays an important role in translational accuracy.</text>
</comment>
<comment type="function">
    <text evidence="1">Located at the back of the 30S subunit body where it stabilizes the conformation of the head with respect to the body.</text>
</comment>
<comment type="subunit">
    <text evidence="1">Part of the 30S ribosomal subunit. Contacts proteins S4 and S8.</text>
</comment>
<comment type="domain">
    <text>The N-terminal domain interacts with the head of the 30S subunit; the C-terminal domain interacts with the body and contacts protein S4. The interaction surface between S4 and S5 is involved in control of translational fidelity.</text>
</comment>
<comment type="similarity">
    <text evidence="1">Belongs to the universal ribosomal protein uS5 family.</text>
</comment>
<protein>
    <recommendedName>
        <fullName evidence="1">Small ribosomal subunit protein uS5</fullName>
    </recommendedName>
    <alternativeName>
        <fullName evidence="3">30S ribosomal protein S5</fullName>
    </alternativeName>
</protein>
<feature type="chain" id="PRO_1000086028" description="Small ribosomal subunit protein uS5">
    <location>
        <begin position="1"/>
        <end position="222"/>
    </location>
</feature>
<feature type="domain" description="S5 DRBM" evidence="1">
    <location>
        <begin position="44"/>
        <end position="107"/>
    </location>
</feature>
<feature type="region of interest" description="Disordered" evidence="2">
    <location>
        <begin position="1"/>
        <end position="41"/>
    </location>
</feature>
<feature type="compositionally biased region" description="Basic and acidic residues" evidence="2">
    <location>
        <begin position="15"/>
        <end position="41"/>
    </location>
</feature>
<keyword id="KW-0687">Ribonucleoprotein</keyword>
<keyword id="KW-0689">Ribosomal protein</keyword>
<keyword id="KW-0694">RNA-binding</keyword>
<keyword id="KW-0699">rRNA-binding</keyword>
<reference key="1">
    <citation type="submission" date="2007-04" db="EMBL/GenBank/DDBJ databases">
        <title>Complete sequence of chromosome of Mycobacterium gilvum PYR-GCK.</title>
        <authorList>
            <consortium name="US DOE Joint Genome Institute"/>
            <person name="Copeland A."/>
            <person name="Lucas S."/>
            <person name="Lapidus A."/>
            <person name="Barry K."/>
            <person name="Detter J.C."/>
            <person name="Glavina del Rio T."/>
            <person name="Hammon N."/>
            <person name="Israni S."/>
            <person name="Dalin E."/>
            <person name="Tice H."/>
            <person name="Pitluck S."/>
            <person name="Chain P."/>
            <person name="Malfatti S."/>
            <person name="Shin M."/>
            <person name="Vergez L."/>
            <person name="Schmutz J."/>
            <person name="Larimer F."/>
            <person name="Land M."/>
            <person name="Hauser L."/>
            <person name="Kyrpides N."/>
            <person name="Mikhailova N."/>
            <person name="Miller C."/>
            <person name="Richardson P."/>
        </authorList>
    </citation>
    <scope>NUCLEOTIDE SEQUENCE [LARGE SCALE GENOMIC DNA]</scope>
    <source>
        <strain>PYR-GCK</strain>
    </source>
</reference>
<dbReference type="EMBL" id="CP000656">
    <property type="protein sequence ID" value="ABP47496.1"/>
    <property type="molecule type" value="Genomic_DNA"/>
</dbReference>
<dbReference type="SMR" id="A4TED4"/>
<dbReference type="STRING" id="350054.Mflv_5030"/>
<dbReference type="KEGG" id="mgi:Mflv_5030"/>
<dbReference type="eggNOG" id="COG0098">
    <property type="taxonomic scope" value="Bacteria"/>
</dbReference>
<dbReference type="HOGENOM" id="CLU_065898_1_1_11"/>
<dbReference type="OrthoDB" id="9809045at2"/>
<dbReference type="GO" id="GO:0015935">
    <property type="term" value="C:small ribosomal subunit"/>
    <property type="evidence" value="ECO:0007669"/>
    <property type="project" value="InterPro"/>
</dbReference>
<dbReference type="GO" id="GO:0019843">
    <property type="term" value="F:rRNA binding"/>
    <property type="evidence" value="ECO:0007669"/>
    <property type="project" value="UniProtKB-UniRule"/>
</dbReference>
<dbReference type="GO" id="GO:0003735">
    <property type="term" value="F:structural constituent of ribosome"/>
    <property type="evidence" value="ECO:0007669"/>
    <property type="project" value="InterPro"/>
</dbReference>
<dbReference type="GO" id="GO:0006412">
    <property type="term" value="P:translation"/>
    <property type="evidence" value="ECO:0007669"/>
    <property type="project" value="UniProtKB-UniRule"/>
</dbReference>
<dbReference type="FunFam" id="3.30.160.20:FF:000001">
    <property type="entry name" value="30S ribosomal protein S5"/>
    <property type="match status" value="1"/>
</dbReference>
<dbReference type="FunFam" id="3.30.230.10:FF:000002">
    <property type="entry name" value="30S ribosomal protein S5"/>
    <property type="match status" value="1"/>
</dbReference>
<dbReference type="Gene3D" id="3.30.160.20">
    <property type="match status" value="1"/>
</dbReference>
<dbReference type="Gene3D" id="3.30.230.10">
    <property type="match status" value="1"/>
</dbReference>
<dbReference type="HAMAP" id="MF_01307_B">
    <property type="entry name" value="Ribosomal_uS5_B"/>
    <property type="match status" value="1"/>
</dbReference>
<dbReference type="InterPro" id="IPR020568">
    <property type="entry name" value="Ribosomal_Su5_D2-typ_SF"/>
</dbReference>
<dbReference type="InterPro" id="IPR000851">
    <property type="entry name" value="Ribosomal_uS5"/>
</dbReference>
<dbReference type="InterPro" id="IPR005712">
    <property type="entry name" value="Ribosomal_uS5_bac-type"/>
</dbReference>
<dbReference type="InterPro" id="IPR005324">
    <property type="entry name" value="Ribosomal_uS5_C"/>
</dbReference>
<dbReference type="InterPro" id="IPR013810">
    <property type="entry name" value="Ribosomal_uS5_N"/>
</dbReference>
<dbReference type="InterPro" id="IPR018192">
    <property type="entry name" value="Ribosomal_uS5_N_CS"/>
</dbReference>
<dbReference type="InterPro" id="IPR014721">
    <property type="entry name" value="Ribsml_uS5_D2-typ_fold_subgr"/>
</dbReference>
<dbReference type="NCBIfam" id="TIGR01021">
    <property type="entry name" value="rpsE_bact"/>
    <property type="match status" value="1"/>
</dbReference>
<dbReference type="PANTHER" id="PTHR48277">
    <property type="entry name" value="MITOCHONDRIAL RIBOSOMAL PROTEIN S5"/>
    <property type="match status" value="1"/>
</dbReference>
<dbReference type="PANTHER" id="PTHR48277:SF1">
    <property type="entry name" value="MITOCHONDRIAL RIBOSOMAL PROTEIN S5"/>
    <property type="match status" value="1"/>
</dbReference>
<dbReference type="Pfam" id="PF00333">
    <property type="entry name" value="Ribosomal_S5"/>
    <property type="match status" value="1"/>
</dbReference>
<dbReference type="Pfam" id="PF03719">
    <property type="entry name" value="Ribosomal_S5_C"/>
    <property type="match status" value="1"/>
</dbReference>
<dbReference type="SUPFAM" id="SSF54768">
    <property type="entry name" value="dsRNA-binding domain-like"/>
    <property type="match status" value="1"/>
</dbReference>
<dbReference type="SUPFAM" id="SSF54211">
    <property type="entry name" value="Ribosomal protein S5 domain 2-like"/>
    <property type="match status" value="1"/>
</dbReference>
<dbReference type="PROSITE" id="PS00585">
    <property type="entry name" value="RIBOSOMAL_S5"/>
    <property type="match status" value="1"/>
</dbReference>
<dbReference type="PROSITE" id="PS50881">
    <property type="entry name" value="S5_DSRBD"/>
    <property type="match status" value="1"/>
</dbReference>
<name>RS5_MYCGI</name>
<gene>
    <name evidence="1" type="primary">rpsE</name>
    <name type="ordered locus">Mflv_5030</name>
</gene>
<evidence type="ECO:0000255" key="1">
    <source>
        <dbReference type="HAMAP-Rule" id="MF_01307"/>
    </source>
</evidence>
<evidence type="ECO:0000256" key="2">
    <source>
        <dbReference type="SAM" id="MobiDB-lite"/>
    </source>
</evidence>
<evidence type="ECO:0000305" key="3"/>